<feature type="chain" id="PRO_0000238182" description="Phosphoglycolate phosphatase">
    <location>
        <begin position="1"/>
        <end position="227"/>
    </location>
</feature>
<feature type="active site" description="Nucleophile" evidence="1">
    <location>
        <position position="11"/>
    </location>
</feature>
<feature type="binding site" evidence="1">
    <location>
        <position position="11"/>
    </location>
    <ligand>
        <name>Mg(2+)</name>
        <dbReference type="ChEBI" id="CHEBI:18420"/>
    </ligand>
</feature>
<feature type="binding site" evidence="1">
    <location>
        <position position="13"/>
    </location>
    <ligand>
        <name>Mg(2+)</name>
        <dbReference type="ChEBI" id="CHEBI:18420"/>
    </ligand>
</feature>
<feature type="binding site" evidence="1">
    <location>
        <position position="176"/>
    </location>
    <ligand>
        <name>Mg(2+)</name>
        <dbReference type="ChEBI" id="CHEBI:18420"/>
    </ligand>
</feature>
<protein>
    <recommendedName>
        <fullName evidence="1">Phosphoglycolate phosphatase</fullName>
        <shortName evidence="1">PGP</shortName>
        <shortName evidence="1">PGPase</shortName>
        <ecNumber evidence="1">3.1.3.18</ecNumber>
    </recommendedName>
</protein>
<comment type="function">
    <text evidence="1">Specifically catalyzes the dephosphorylation of 2-phosphoglycolate. Is involved in the dissimilation of the intracellular 2-phosphoglycolate formed during the DNA repair of 3'-phosphoglycolate ends, a major class of DNA lesions induced by oxidative stress.</text>
</comment>
<comment type="catalytic activity">
    <reaction evidence="1">
        <text>2-phosphoglycolate + H2O = glycolate + phosphate</text>
        <dbReference type="Rhea" id="RHEA:14369"/>
        <dbReference type="ChEBI" id="CHEBI:15377"/>
        <dbReference type="ChEBI" id="CHEBI:29805"/>
        <dbReference type="ChEBI" id="CHEBI:43474"/>
        <dbReference type="ChEBI" id="CHEBI:58033"/>
        <dbReference type="EC" id="3.1.3.18"/>
    </reaction>
</comment>
<comment type="cofactor">
    <cofactor evidence="1">
        <name>Mg(2+)</name>
        <dbReference type="ChEBI" id="CHEBI:18420"/>
    </cofactor>
</comment>
<comment type="pathway">
    <text evidence="1">Organic acid metabolism; glycolate biosynthesis; glycolate from 2-phosphoglycolate: step 1/1.</text>
</comment>
<comment type="similarity">
    <text evidence="1">Belongs to the HAD-like hydrolase superfamily. CbbY/CbbZ/Gph/YieH family.</text>
</comment>
<proteinExistence type="inferred from homology"/>
<accession>Q5E2G4</accession>
<organism>
    <name type="scientific">Aliivibrio fischeri (strain ATCC 700601 / ES114)</name>
    <name type="common">Vibrio fischeri</name>
    <dbReference type="NCBI Taxonomy" id="312309"/>
    <lineage>
        <taxon>Bacteria</taxon>
        <taxon>Pseudomonadati</taxon>
        <taxon>Pseudomonadota</taxon>
        <taxon>Gammaproteobacteria</taxon>
        <taxon>Vibrionales</taxon>
        <taxon>Vibrionaceae</taxon>
        <taxon>Aliivibrio</taxon>
    </lineage>
</organism>
<name>GPH_ALIF1</name>
<reference key="1">
    <citation type="journal article" date="2005" name="Proc. Natl. Acad. Sci. U.S.A.">
        <title>Complete genome sequence of Vibrio fischeri: a symbiotic bacterium with pathogenic congeners.</title>
        <authorList>
            <person name="Ruby E.G."/>
            <person name="Urbanowski M."/>
            <person name="Campbell J."/>
            <person name="Dunn A."/>
            <person name="Faini M."/>
            <person name="Gunsalus R."/>
            <person name="Lostroh P."/>
            <person name="Lupp C."/>
            <person name="McCann J."/>
            <person name="Millikan D."/>
            <person name="Schaefer A."/>
            <person name="Stabb E."/>
            <person name="Stevens A."/>
            <person name="Visick K."/>
            <person name="Whistler C."/>
            <person name="Greenberg E.P."/>
        </authorList>
    </citation>
    <scope>NUCLEOTIDE SEQUENCE [LARGE SCALE GENOMIC DNA]</scope>
    <source>
        <strain>ATCC 700601 / ES114</strain>
    </source>
</reference>
<dbReference type="EC" id="3.1.3.18" evidence="1"/>
<dbReference type="EMBL" id="CP000020">
    <property type="protein sequence ID" value="AAW86782.1"/>
    <property type="molecule type" value="Genomic_DNA"/>
</dbReference>
<dbReference type="RefSeq" id="WP_011262696.1">
    <property type="nucleotide sequence ID" value="NC_006840.2"/>
</dbReference>
<dbReference type="RefSeq" id="YP_205670.1">
    <property type="nucleotide sequence ID" value="NC_006840.2"/>
</dbReference>
<dbReference type="SMR" id="Q5E2G4"/>
<dbReference type="STRING" id="312309.VF_2287"/>
<dbReference type="EnsemblBacteria" id="AAW86782">
    <property type="protein sequence ID" value="AAW86782"/>
    <property type="gene ID" value="VF_2287"/>
</dbReference>
<dbReference type="GeneID" id="54165002"/>
<dbReference type="KEGG" id="vfi:VF_2287"/>
<dbReference type="PATRIC" id="fig|312309.11.peg.2325"/>
<dbReference type="eggNOG" id="COG0546">
    <property type="taxonomic scope" value="Bacteria"/>
</dbReference>
<dbReference type="HOGENOM" id="CLU_045011_19_1_6"/>
<dbReference type="OrthoDB" id="9776368at2"/>
<dbReference type="UniPathway" id="UPA00865">
    <property type="reaction ID" value="UER00834"/>
</dbReference>
<dbReference type="Proteomes" id="UP000000537">
    <property type="component" value="Chromosome I"/>
</dbReference>
<dbReference type="GO" id="GO:0005829">
    <property type="term" value="C:cytosol"/>
    <property type="evidence" value="ECO:0007669"/>
    <property type="project" value="TreeGrafter"/>
</dbReference>
<dbReference type="GO" id="GO:0046872">
    <property type="term" value="F:metal ion binding"/>
    <property type="evidence" value="ECO:0007669"/>
    <property type="project" value="UniProtKB-KW"/>
</dbReference>
<dbReference type="GO" id="GO:0008967">
    <property type="term" value="F:phosphoglycolate phosphatase activity"/>
    <property type="evidence" value="ECO:0007669"/>
    <property type="project" value="UniProtKB-UniRule"/>
</dbReference>
<dbReference type="GO" id="GO:0005975">
    <property type="term" value="P:carbohydrate metabolic process"/>
    <property type="evidence" value="ECO:0007669"/>
    <property type="project" value="InterPro"/>
</dbReference>
<dbReference type="GO" id="GO:0006281">
    <property type="term" value="P:DNA repair"/>
    <property type="evidence" value="ECO:0007669"/>
    <property type="project" value="TreeGrafter"/>
</dbReference>
<dbReference type="GO" id="GO:0046295">
    <property type="term" value="P:glycolate biosynthetic process"/>
    <property type="evidence" value="ECO:0007669"/>
    <property type="project" value="UniProtKB-UniRule"/>
</dbReference>
<dbReference type="CDD" id="cd16417">
    <property type="entry name" value="HAD_PGPase"/>
    <property type="match status" value="1"/>
</dbReference>
<dbReference type="FunFam" id="3.40.50.1000:FF:000022">
    <property type="entry name" value="Phosphoglycolate phosphatase"/>
    <property type="match status" value="1"/>
</dbReference>
<dbReference type="Gene3D" id="3.40.50.1000">
    <property type="entry name" value="HAD superfamily/HAD-like"/>
    <property type="match status" value="1"/>
</dbReference>
<dbReference type="Gene3D" id="1.10.150.240">
    <property type="entry name" value="Putative phosphatase, domain 2"/>
    <property type="match status" value="1"/>
</dbReference>
<dbReference type="HAMAP" id="MF_00495">
    <property type="entry name" value="GPH_hydrolase_bact"/>
    <property type="match status" value="1"/>
</dbReference>
<dbReference type="InterPro" id="IPR050155">
    <property type="entry name" value="HAD-like_hydrolase_sf"/>
</dbReference>
<dbReference type="InterPro" id="IPR036412">
    <property type="entry name" value="HAD-like_sf"/>
</dbReference>
<dbReference type="InterPro" id="IPR006439">
    <property type="entry name" value="HAD-SF_hydro_IA"/>
</dbReference>
<dbReference type="InterPro" id="IPR006549">
    <property type="entry name" value="HAD-SF_hydro_IIIA"/>
</dbReference>
<dbReference type="InterPro" id="IPR041492">
    <property type="entry name" value="HAD_2"/>
</dbReference>
<dbReference type="InterPro" id="IPR023214">
    <property type="entry name" value="HAD_sf"/>
</dbReference>
<dbReference type="InterPro" id="IPR023198">
    <property type="entry name" value="PGP-like_dom2"/>
</dbReference>
<dbReference type="InterPro" id="IPR037512">
    <property type="entry name" value="PGPase_prok"/>
</dbReference>
<dbReference type="NCBIfam" id="TIGR01549">
    <property type="entry name" value="HAD-SF-IA-v1"/>
    <property type="match status" value="1"/>
</dbReference>
<dbReference type="NCBIfam" id="TIGR01509">
    <property type="entry name" value="HAD-SF-IA-v3"/>
    <property type="match status" value="1"/>
</dbReference>
<dbReference type="NCBIfam" id="TIGR01662">
    <property type="entry name" value="HAD-SF-IIIA"/>
    <property type="match status" value="1"/>
</dbReference>
<dbReference type="NCBIfam" id="TIGR01449">
    <property type="entry name" value="PGP_bact"/>
    <property type="match status" value="1"/>
</dbReference>
<dbReference type="NCBIfam" id="NF009695">
    <property type="entry name" value="PRK13222.1-2"/>
    <property type="match status" value="1"/>
</dbReference>
<dbReference type="PANTHER" id="PTHR43434">
    <property type="entry name" value="PHOSPHOGLYCOLATE PHOSPHATASE"/>
    <property type="match status" value="1"/>
</dbReference>
<dbReference type="PANTHER" id="PTHR43434:SF1">
    <property type="entry name" value="PHOSPHOGLYCOLATE PHOSPHATASE"/>
    <property type="match status" value="1"/>
</dbReference>
<dbReference type="Pfam" id="PF13419">
    <property type="entry name" value="HAD_2"/>
    <property type="match status" value="1"/>
</dbReference>
<dbReference type="PRINTS" id="PR00413">
    <property type="entry name" value="HADHALOGNASE"/>
</dbReference>
<dbReference type="SFLD" id="SFLDG01135">
    <property type="entry name" value="C1.5.6:_HAD__Beta-PGM__Phospha"/>
    <property type="match status" value="1"/>
</dbReference>
<dbReference type="SFLD" id="SFLDG01129">
    <property type="entry name" value="C1.5:_HAD__Beta-PGM__Phosphata"/>
    <property type="match status" value="1"/>
</dbReference>
<dbReference type="SUPFAM" id="SSF56784">
    <property type="entry name" value="HAD-like"/>
    <property type="match status" value="1"/>
</dbReference>
<evidence type="ECO:0000255" key="1">
    <source>
        <dbReference type="HAMAP-Rule" id="MF_00495"/>
    </source>
</evidence>
<gene>
    <name type="ordered locus">VF_2287</name>
</gene>
<keyword id="KW-0119">Carbohydrate metabolism</keyword>
<keyword id="KW-0378">Hydrolase</keyword>
<keyword id="KW-0460">Magnesium</keyword>
<keyword id="KW-0479">Metal-binding</keyword>
<keyword id="KW-1185">Reference proteome</keyword>
<sequence>MFEDIKLIAFDLDGTLLDSVPDLARAVDLAMQDMGYPRVTLEQASHWIGNGADVLVSRALSQNYIVKDDLDAELIKQARARLDQHYHDGGHQLSHLYPDVKDTLERLHQQGYTLALVTNKPSQFVPELLEQHQLTHLFSEVIGGDTFAEKKPNPFALNWLLDKHGLTAPQMLMVGDSKNDIQAAQAAGCHSFALTYGYNHGEPISDSQPDVVSDEFKYLLAVLSMAR</sequence>